<evidence type="ECO:0000255" key="1"/>
<evidence type="ECO:0000305" key="2"/>
<comment type="function">
    <text>Implicated in mitochondrial protein import and macromolecular assembly. May facilitate the correct folding of imported proteins. May also prevent misfolding and promote the refolding and proper assembly of unfolded polypeptides generated under stress conditions in the mitochondrial matrix.</text>
</comment>
<comment type="subcellular location">
    <subcellularLocation>
        <location>Mitochondrion</location>
    </subcellularLocation>
</comment>
<comment type="similarity">
    <text evidence="2">Belongs to the chaperonin (HSP60) family.</text>
</comment>
<keyword id="KW-0067">ATP-binding</keyword>
<keyword id="KW-0143">Chaperone</keyword>
<keyword id="KW-0496">Mitochondrion</keyword>
<keyword id="KW-0547">Nucleotide-binding</keyword>
<keyword id="KW-0346">Stress response</keyword>
<keyword id="KW-0809">Transit peptide</keyword>
<organism>
    <name type="scientific">Euglena gracilis</name>
    <dbReference type="NCBI Taxonomy" id="3039"/>
    <lineage>
        <taxon>Eukaryota</taxon>
        <taxon>Discoba</taxon>
        <taxon>Euglenozoa</taxon>
        <taxon>Euglenida</taxon>
        <taxon>Spirocuta</taxon>
        <taxon>Euglenophyceae</taxon>
        <taxon>Euglenales</taxon>
        <taxon>Euglenaceae</taxon>
        <taxon>Euglena</taxon>
    </lineage>
</organism>
<dbReference type="EMBL" id="U49053">
    <property type="protein sequence ID" value="AAB03571.1"/>
    <property type="molecule type" value="mRNA"/>
</dbReference>
<dbReference type="EMBL" id="X95992">
    <property type="protein sequence ID" value="CAA65238.1"/>
    <property type="molecule type" value="mRNA"/>
</dbReference>
<dbReference type="SMR" id="Q39727"/>
<dbReference type="GO" id="GO:0005739">
    <property type="term" value="C:mitochondrion"/>
    <property type="evidence" value="ECO:0007669"/>
    <property type="project" value="UniProtKB-SubCell"/>
</dbReference>
<dbReference type="GO" id="GO:0005524">
    <property type="term" value="F:ATP binding"/>
    <property type="evidence" value="ECO:0007669"/>
    <property type="project" value="UniProtKB-KW"/>
</dbReference>
<dbReference type="GO" id="GO:0140662">
    <property type="term" value="F:ATP-dependent protein folding chaperone"/>
    <property type="evidence" value="ECO:0007669"/>
    <property type="project" value="InterPro"/>
</dbReference>
<dbReference type="GO" id="GO:0042026">
    <property type="term" value="P:protein refolding"/>
    <property type="evidence" value="ECO:0007669"/>
    <property type="project" value="InterPro"/>
</dbReference>
<dbReference type="CDD" id="cd03344">
    <property type="entry name" value="GroEL"/>
    <property type="match status" value="1"/>
</dbReference>
<dbReference type="FunFam" id="3.50.7.10:FF:000001">
    <property type="entry name" value="60 kDa chaperonin"/>
    <property type="match status" value="1"/>
</dbReference>
<dbReference type="Gene3D" id="3.50.7.10">
    <property type="entry name" value="GroEL"/>
    <property type="match status" value="1"/>
</dbReference>
<dbReference type="Gene3D" id="1.10.560.10">
    <property type="entry name" value="GroEL-like equatorial domain"/>
    <property type="match status" value="1"/>
</dbReference>
<dbReference type="Gene3D" id="3.30.260.10">
    <property type="entry name" value="TCP-1-like chaperonin intermediate domain"/>
    <property type="match status" value="1"/>
</dbReference>
<dbReference type="HAMAP" id="MF_00600">
    <property type="entry name" value="CH60"/>
    <property type="match status" value="1"/>
</dbReference>
<dbReference type="InterPro" id="IPR001844">
    <property type="entry name" value="Cpn60/GroEL"/>
</dbReference>
<dbReference type="InterPro" id="IPR002423">
    <property type="entry name" value="Cpn60/GroEL/TCP-1"/>
</dbReference>
<dbReference type="InterPro" id="IPR027409">
    <property type="entry name" value="GroEL-like_apical_dom_sf"/>
</dbReference>
<dbReference type="InterPro" id="IPR027413">
    <property type="entry name" value="GROEL-like_equatorial_sf"/>
</dbReference>
<dbReference type="InterPro" id="IPR027410">
    <property type="entry name" value="TCP-1-like_intermed_sf"/>
</dbReference>
<dbReference type="NCBIfam" id="TIGR02348">
    <property type="entry name" value="GroEL"/>
    <property type="match status" value="1"/>
</dbReference>
<dbReference type="NCBIfam" id="NF000592">
    <property type="entry name" value="PRK00013.1"/>
    <property type="match status" value="1"/>
</dbReference>
<dbReference type="NCBIfam" id="NF009487">
    <property type="entry name" value="PRK12849.1"/>
    <property type="match status" value="1"/>
</dbReference>
<dbReference type="NCBIfam" id="NF009488">
    <property type="entry name" value="PRK12850.1"/>
    <property type="match status" value="1"/>
</dbReference>
<dbReference type="NCBIfam" id="NF009489">
    <property type="entry name" value="PRK12851.1"/>
    <property type="match status" value="1"/>
</dbReference>
<dbReference type="PANTHER" id="PTHR45633">
    <property type="entry name" value="60 KDA HEAT SHOCK PROTEIN, MITOCHONDRIAL"/>
    <property type="match status" value="1"/>
</dbReference>
<dbReference type="Pfam" id="PF00118">
    <property type="entry name" value="Cpn60_TCP1"/>
    <property type="match status" value="1"/>
</dbReference>
<dbReference type="PRINTS" id="PR00298">
    <property type="entry name" value="CHAPERONIN60"/>
</dbReference>
<dbReference type="SUPFAM" id="SSF52029">
    <property type="entry name" value="GroEL apical domain-like"/>
    <property type="match status" value="1"/>
</dbReference>
<dbReference type="SUPFAM" id="SSF48592">
    <property type="entry name" value="GroEL equatorial domain-like"/>
    <property type="match status" value="1"/>
</dbReference>
<dbReference type="SUPFAM" id="SSF54849">
    <property type="entry name" value="GroEL-intermediate domain like"/>
    <property type="match status" value="1"/>
</dbReference>
<feature type="transit peptide" description="Mitochondrion" evidence="1">
    <location>
        <begin position="1"/>
        <end status="unknown"/>
    </location>
</feature>
<feature type="chain" id="PRO_0000005013" description="Chaperonin CPN60, mitochondrial">
    <location>
        <begin status="unknown"/>
        <end position="569"/>
    </location>
</feature>
<feature type="sequence conflict" description="In Ref. 2; CAA65238." evidence="2" ref="2">
    <original>T</original>
    <variation>A</variation>
    <location>
        <position position="111"/>
    </location>
</feature>
<reference key="1">
    <citation type="submission" date="1996-02" db="EMBL/GenBank/DDBJ databases">
        <authorList>
            <person name="Yasuhira S."/>
            <person name="Simpson L."/>
        </authorList>
    </citation>
    <scope>NUCLEOTIDE SEQUENCE [MRNA]</scope>
    <source>
        <strain>W10BSML</strain>
    </source>
</reference>
<reference key="2">
    <citation type="submission" date="1996-03" db="EMBL/GenBank/DDBJ databases">
        <authorList>
            <person name="Siegner A."/>
        </authorList>
    </citation>
    <scope>NUCLEOTIDE SEQUENCE [MRNA]</scope>
    <source>
        <strain>Z / UTEX 753</strain>
    </source>
</reference>
<accession>Q39727</accession>
<accession>Q39723</accession>
<gene>
    <name type="primary">HSP60</name>
</gene>
<protein>
    <recommendedName>
        <fullName>Chaperonin CPN60, mitochondrial</fullName>
    </recommendedName>
    <alternativeName>
        <fullName>HSP 60</fullName>
    </alternativeName>
</protein>
<sequence>MNRAGVLARRGYSSKGKDILFGVDARVKMLAGVNRLSQAVSVTLGPKGRNVVIEQPFGAPKITKDGVTVAKAIEFKDSFENLGAQLVRQVANTTNEIAGDGTTTSTVLANTIFSEGYKAVTQGTSPVDMKRGIDRAVEVVLQSLTEQSKTIVSKEEVTQVATISANGDVEIGQLIGHAMEKVGKAGVITVSDGKTLDTELEVVEGMSLDRGYISPYFVTNAKTQKVEIEDAFILLCQKKVSTIQQILPVLEHIAKANRPLVIIADDVDSEALATLIINKINGKLKVCAVKAPGFGDNKTNMLHDVAIFTGGEVYNEELGMNLEQHFDHRILGFAKKVSVGKDQTIILNGAGDPKAVEERKELIQGMLGKTDSSYEKEKLNERLAKLSGGVAVIKVGGASDVEVGEKKDRVTDALNATRAAVSEGIVPGGGAALLYASSALAELAADPTLTEDQKTGVRIVMSAIKLPAITIVKNAGGEGAVVIHQLLAEKKMQQGYDAQQGKYVNMFEAGIIDPAKVVKTALVDAASVAGLMITTEAAITDIPAPAPAAGGGMDGMGGMGGMGGMGGMY</sequence>
<name>CH60_EUGGR</name>
<proteinExistence type="evidence at transcript level"/>